<sequence length="72" mass="8240">MAKEEAIEIEGVILEALPNAQFKVKLENSLEVLAHVSGKIRMHYIRILPGDKVKVQISPYDISKGRITYRYK</sequence>
<protein>
    <recommendedName>
        <fullName evidence="1">Translation initiation factor IF-1</fullName>
    </recommendedName>
</protein>
<feature type="chain" id="PRO_0000263835" description="Translation initiation factor IF-1">
    <location>
        <begin position="1"/>
        <end position="72"/>
    </location>
</feature>
<feature type="domain" description="S1-like" evidence="1">
    <location>
        <begin position="1"/>
        <end position="72"/>
    </location>
</feature>
<comment type="function">
    <text evidence="1">One of the essential components for the initiation of protein synthesis. Stabilizes the binding of IF-2 and IF-3 on the 30S subunit to which N-formylmethionyl-tRNA(fMet) subsequently binds. Helps modulate mRNA selection, yielding the 30S pre-initiation complex (PIC). Upon addition of the 50S ribosomal subunit IF-1, IF-2 and IF-3 are released leaving the mature 70S translation initiation complex.</text>
</comment>
<comment type="subunit">
    <text evidence="1">Component of the 30S ribosomal translation pre-initiation complex which assembles on the 30S ribosome in the order IF-2 and IF-3, IF-1 and N-formylmethionyl-tRNA(fMet); mRNA recruitment can occur at any time during PIC assembly.</text>
</comment>
<comment type="subcellular location">
    <subcellularLocation>
        <location evidence="1">Cytoplasm</location>
    </subcellularLocation>
</comment>
<comment type="similarity">
    <text evidence="1">Belongs to the IF-1 family.</text>
</comment>
<keyword id="KW-0963">Cytoplasm</keyword>
<keyword id="KW-0396">Initiation factor</keyword>
<keyword id="KW-0648">Protein biosynthesis</keyword>
<keyword id="KW-1185">Reference proteome</keyword>
<keyword id="KW-0694">RNA-binding</keyword>
<keyword id="KW-0699">rRNA-binding</keyword>
<gene>
    <name evidence="1" type="primary">infA</name>
    <name type="ordered locus">Plut_0203</name>
</gene>
<dbReference type="EMBL" id="CP000096">
    <property type="protein sequence ID" value="ABB23091.1"/>
    <property type="molecule type" value="Genomic_DNA"/>
</dbReference>
<dbReference type="RefSeq" id="WP_006366573.1">
    <property type="nucleotide sequence ID" value="NC_007512.1"/>
</dbReference>
<dbReference type="SMR" id="Q3B6E0"/>
<dbReference type="STRING" id="319225.Plut_0203"/>
<dbReference type="KEGG" id="plt:Plut_0203"/>
<dbReference type="eggNOG" id="COG0361">
    <property type="taxonomic scope" value="Bacteria"/>
</dbReference>
<dbReference type="HOGENOM" id="CLU_151267_1_0_10"/>
<dbReference type="OrthoDB" id="9803250at2"/>
<dbReference type="Proteomes" id="UP000002709">
    <property type="component" value="Chromosome"/>
</dbReference>
<dbReference type="GO" id="GO:0005829">
    <property type="term" value="C:cytosol"/>
    <property type="evidence" value="ECO:0007669"/>
    <property type="project" value="TreeGrafter"/>
</dbReference>
<dbReference type="GO" id="GO:0043022">
    <property type="term" value="F:ribosome binding"/>
    <property type="evidence" value="ECO:0007669"/>
    <property type="project" value="UniProtKB-UniRule"/>
</dbReference>
<dbReference type="GO" id="GO:0019843">
    <property type="term" value="F:rRNA binding"/>
    <property type="evidence" value="ECO:0007669"/>
    <property type="project" value="UniProtKB-UniRule"/>
</dbReference>
<dbReference type="GO" id="GO:0003743">
    <property type="term" value="F:translation initiation factor activity"/>
    <property type="evidence" value="ECO:0007669"/>
    <property type="project" value="UniProtKB-UniRule"/>
</dbReference>
<dbReference type="CDD" id="cd04451">
    <property type="entry name" value="S1_IF1"/>
    <property type="match status" value="1"/>
</dbReference>
<dbReference type="FunFam" id="2.40.50.140:FF:000002">
    <property type="entry name" value="Translation initiation factor IF-1"/>
    <property type="match status" value="1"/>
</dbReference>
<dbReference type="Gene3D" id="2.40.50.140">
    <property type="entry name" value="Nucleic acid-binding proteins"/>
    <property type="match status" value="1"/>
</dbReference>
<dbReference type="HAMAP" id="MF_00075">
    <property type="entry name" value="IF_1"/>
    <property type="match status" value="1"/>
</dbReference>
<dbReference type="InterPro" id="IPR012340">
    <property type="entry name" value="NA-bd_OB-fold"/>
</dbReference>
<dbReference type="InterPro" id="IPR006196">
    <property type="entry name" value="RNA-binding_domain_S1_IF1"/>
</dbReference>
<dbReference type="InterPro" id="IPR003029">
    <property type="entry name" value="S1_domain"/>
</dbReference>
<dbReference type="InterPro" id="IPR004368">
    <property type="entry name" value="TIF_IF1"/>
</dbReference>
<dbReference type="NCBIfam" id="TIGR00008">
    <property type="entry name" value="infA"/>
    <property type="match status" value="1"/>
</dbReference>
<dbReference type="PANTHER" id="PTHR33370">
    <property type="entry name" value="TRANSLATION INITIATION FACTOR IF-1, CHLOROPLASTIC"/>
    <property type="match status" value="1"/>
</dbReference>
<dbReference type="PANTHER" id="PTHR33370:SF1">
    <property type="entry name" value="TRANSLATION INITIATION FACTOR IF-1, CHLOROPLASTIC"/>
    <property type="match status" value="1"/>
</dbReference>
<dbReference type="Pfam" id="PF01176">
    <property type="entry name" value="eIF-1a"/>
    <property type="match status" value="1"/>
</dbReference>
<dbReference type="SMART" id="SM00316">
    <property type="entry name" value="S1"/>
    <property type="match status" value="1"/>
</dbReference>
<dbReference type="SUPFAM" id="SSF50249">
    <property type="entry name" value="Nucleic acid-binding proteins"/>
    <property type="match status" value="1"/>
</dbReference>
<dbReference type="PROSITE" id="PS50832">
    <property type="entry name" value="S1_IF1_TYPE"/>
    <property type="match status" value="1"/>
</dbReference>
<name>IF1_CHLL3</name>
<organism>
    <name type="scientific">Chlorobium luteolum (strain DSM 273 / BCRC 81028 / 2530)</name>
    <name type="common">Pelodictyon luteolum</name>
    <dbReference type="NCBI Taxonomy" id="319225"/>
    <lineage>
        <taxon>Bacteria</taxon>
        <taxon>Pseudomonadati</taxon>
        <taxon>Chlorobiota</taxon>
        <taxon>Chlorobiia</taxon>
        <taxon>Chlorobiales</taxon>
        <taxon>Chlorobiaceae</taxon>
        <taxon>Chlorobium/Pelodictyon group</taxon>
        <taxon>Pelodictyon</taxon>
    </lineage>
</organism>
<proteinExistence type="inferred from homology"/>
<accession>Q3B6E0</accession>
<evidence type="ECO:0000255" key="1">
    <source>
        <dbReference type="HAMAP-Rule" id="MF_00075"/>
    </source>
</evidence>
<reference key="1">
    <citation type="submission" date="2005-08" db="EMBL/GenBank/DDBJ databases">
        <title>Complete sequence of Pelodictyon luteolum DSM 273.</title>
        <authorList>
            <consortium name="US DOE Joint Genome Institute"/>
            <person name="Copeland A."/>
            <person name="Lucas S."/>
            <person name="Lapidus A."/>
            <person name="Barry K."/>
            <person name="Detter J.C."/>
            <person name="Glavina T."/>
            <person name="Hammon N."/>
            <person name="Israni S."/>
            <person name="Pitluck S."/>
            <person name="Bryant D."/>
            <person name="Schmutz J."/>
            <person name="Larimer F."/>
            <person name="Land M."/>
            <person name="Kyrpides N."/>
            <person name="Ivanova N."/>
            <person name="Richardson P."/>
        </authorList>
    </citation>
    <scope>NUCLEOTIDE SEQUENCE [LARGE SCALE GENOMIC DNA]</scope>
    <source>
        <strain>DSM 273 / BCRC 81028 / 2530</strain>
    </source>
</reference>